<protein>
    <recommendedName>
        <fullName evidence="1">S-adenosylmethionine synthase</fullName>
        <shortName evidence="1">AdoMet synthase</shortName>
        <ecNumber evidence="1">2.5.1.6</ecNumber>
    </recommendedName>
    <alternativeName>
        <fullName evidence="1">MAT</fullName>
    </alternativeName>
    <alternativeName>
        <fullName evidence="1">Methionine adenosyltransferase</fullName>
    </alternativeName>
</protein>
<evidence type="ECO:0000255" key="1">
    <source>
        <dbReference type="HAMAP-Rule" id="MF_00086"/>
    </source>
</evidence>
<comment type="function">
    <text evidence="1">Catalyzes the formation of S-adenosylmethionine (AdoMet) from methionine and ATP. The overall synthetic reaction is composed of two sequential steps, AdoMet formation and the subsequent tripolyphosphate hydrolysis which occurs prior to release of AdoMet from the enzyme.</text>
</comment>
<comment type="catalytic activity">
    <reaction evidence="1">
        <text>L-methionine + ATP + H2O = S-adenosyl-L-methionine + phosphate + diphosphate</text>
        <dbReference type="Rhea" id="RHEA:21080"/>
        <dbReference type="ChEBI" id="CHEBI:15377"/>
        <dbReference type="ChEBI" id="CHEBI:30616"/>
        <dbReference type="ChEBI" id="CHEBI:33019"/>
        <dbReference type="ChEBI" id="CHEBI:43474"/>
        <dbReference type="ChEBI" id="CHEBI:57844"/>
        <dbReference type="ChEBI" id="CHEBI:59789"/>
        <dbReference type="EC" id="2.5.1.6"/>
    </reaction>
</comment>
<comment type="cofactor">
    <cofactor evidence="1">
        <name>Mg(2+)</name>
        <dbReference type="ChEBI" id="CHEBI:18420"/>
    </cofactor>
    <text evidence="1">Binds 2 divalent ions per subunit.</text>
</comment>
<comment type="cofactor">
    <cofactor evidence="1">
        <name>K(+)</name>
        <dbReference type="ChEBI" id="CHEBI:29103"/>
    </cofactor>
    <text evidence="1">Binds 1 potassium ion per subunit.</text>
</comment>
<comment type="pathway">
    <text evidence="1">Amino-acid biosynthesis; S-adenosyl-L-methionine biosynthesis; S-adenosyl-L-methionine from L-methionine: step 1/1.</text>
</comment>
<comment type="subunit">
    <text evidence="1">Homotetramer; dimer of dimers.</text>
</comment>
<comment type="subcellular location">
    <subcellularLocation>
        <location evidence="1">Cytoplasm</location>
    </subcellularLocation>
</comment>
<comment type="similarity">
    <text evidence="1">Belongs to the AdoMet synthase family.</text>
</comment>
<name>METK_FRATW</name>
<reference key="1">
    <citation type="journal article" date="2007" name="PLoS ONE">
        <title>Complete genomic characterization of a pathogenic A.II strain of Francisella tularensis subspecies tularensis.</title>
        <authorList>
            <person name="Beckstrom-Sternberg S.M."/>
            <person name="Auerbach R.K."/>
            <person name="Godbole S."/>
            <person name="Pearson J.V."/>
            <person name="Beckstrom-Sternberg J.S."/>
            <person name="Deng Z."/>
            <person name="Munk C."/>
            <person name="Kubota K."/>
            <person name="Zhou Y."/>
            <person name="Bruce D."/>
            <person name="Noronha J."/>
            <person name="Scheuermann R.H."/>
            <person name="Wang A."/>
            <person name="Wei X."/>
            <person name="Wang J."/>
            <person name="Hao J."/>
            <person name="Wagner D.M."/>
            <person name="Brettin T.S."/>
            <person name="Brown N."/>
            <person name="Gilna P."/>
            <person name="Keim P.S."/>
        </authorList>
    </citation>
    <scope>NUCLEOTIDE SEQUENCE [LARGE SCALE GENOMIC DNA]</scope>
    <source>
        <strain>WY96-3418</strain>
    </source>
</reference>
<organism>
    <name type="scientific">Francisella tularensis subsp. tularensis (strain WY96-3418)</name>
    <dbReference type="NCBI Taxonomy" id="418136"/>
    <lineage>
        <taxon>Bacteria</taxon>
        <taxon>Pseudomonadati</taxon>
        <taxon>Pseudomonadota</taxon>
        <taxon>Gammaproteobacteria</taxon>
        <taxon>Thiotrichales</taxon>
        <taxon>Francisellaceae</taxon>
        <taxon>Francisella</taxon>
    </lineage>
</organism>
<gene>
    <name evidence="1" type="primary">metK</name>
    <name type="ordered locus">FTW_0239</name>
</gene>
<sequence length="386" mass="42190">MSKNYLFTSESVSEGHPDKLADQISDAILDEILKQDKNARVACETLVKTGMALVAGEITTSAWVDIKELVRNVITETGYDNASKGIDGRTCSVINAIDKQSRDITQGVDRGSLEDLGAGDQGLMFGFATNETPTLMPSAIYYSHLLMRKQAELRKSGKLAWLRPDAKAQVTLAYENDKPKFIDTIVLSTQHNESISQKELHDAVIEEIVKKVIPNELITKDTKYHINPTGVFLIGGPQGDCGLTGRKIIVDTYGGAAHHGGGAFSGKDPSKVDRSGAYMGRYIAKNIVAAGLADKCEVQVAYAIGVAKPVSLMVNTFGTGKITDNQIEKLVAEVFDLRVGKIIENLDLLRPIYRKTSNYGHFGRELPEFTWEKIDKADILKSAARI</sequence>
<accession>A4IWA4</accession>
<proteinExistence type="inferred from homology"/>
<dbReference type="EC" id="2.5.1.6" evidence="1"/>
<dbReference type="EMBL" id="CP000608">
    <property type="protein sequence ID" value="ABO46206.1"/>
    <property type="molecule type" value="Genomic_DNA"/>
</dbReference>
<dbReference type="RefSeq" id="WP_003024819.1">
    <property type="nucleotide sequence ID" value="NC_009257.1"/>
</dbReference>
<dbReference type="SMR" id="A4IWA4"/>
<dbReference type="KEGG" id="ftw:FTW_0239"/>
<dbReference type="HOGENOM" id="CLU_041802_1_1_6"/>
<dbReference type="UniPathway" id="UPA00315">
    <property type="reaction ID" value="UER00080"/>
</dbReference>
<dbReference type="GO" id="GO:0005737">
    <property type="term" value="C:cytoplasm"/>
    <property type="evidence" value="ECO:0007669"/>
    <property type="project" value="UniProtKB-SubCell"/>
</dbReference>
<dbReference type="GO" id="GO:0005524">
    <property type="term" value="F:ATP binding"/>
    <property type="evidence" value="ECO:0007669"/>
    <property type="project" value="UniProtKB-UniRule"/>
</dbReference>
<dbReference type="GO" id="GO:0000287">
    <property type="term" value="F:magnesium ion binding"/>
    <property type="evidence" value="ECO:0007669"/>
    <property type="project" value="UniProtKB-UniRule"/>
</dbReference>
<dbReference type="GO" id="GO:0004478">
    <property type="term" value="F:methionine adenosyltransferase activity"/>
    <property type="evidence" value="ECO:0007669"/>
    <property type="project" value="UniProtKB-UniRule"/>
</dbReference>
<dbReference type="GO" id="GO:0006730">
    <property type="term" value="P:one-carbon metabolic process"/>
    <property type="evidence" value="ECO:0007669"/>
    <property type="project" value="UniProtKB-KW"/>
</dbReference>
<dbReference type="GO" id="GO:0006556">
    <property type="term" value="P:S-adenosylmethionine biosynthetic process"/>
    <property type="evidence" value="ECO:0007669"/>
    <property type="project" value="UniProtKB-UniRule"/>
</dbReference>
<dbReference type="CDD" id="cd18079">
    <property type="entry name" value="S-AdoMet_synt"/>
    <property type="match status" value="1"/>
</dbReference>
<dbReference type="FunFam" id="3.30.300.10:FF:000003">
    <property type="entry name" value="S-adenosylmethionine synthase"/>
    <property type="match status" value="1"/>
</dbReference>
<dbReference type="Gene3D" id="3.30.300.10">
    <property type="match status" value="3"/>
</dbReference>
<dbReference type="HAMAP" id="MF_00086">
    <property type="entry name" value="S_AdoMet_synth1"/>
    <property type="match status" value="1"/>
</dbReference>
<dbReference type="InterPro" id="IPR022631">
    <property type="entry name" value="ADOMET_SYNTHASE_CS"/>
</dbReference>
<dbReference type="InterPro" id="IPR022630">
    <property type="entry name" value="S-AdoMet_synt_C"/>
</dbReference>
<dbReference type="InterPro" id="IPR022629">
    <property type="entry name" value="S-AdoMet_synt_central"/>
</dbReference>
<dbReference type="InterPro" id="IPR022628">
    <property type="entry name" value="S-AdoMet_synt_N"/>
</dbReference>
<dbReference type="InterPro" id="IPR002133">
    <property type="entry name" value="S-AdoMet_synthetase"/>
</dbReference>
<dbReference type="InterPro" id="IPR022636">
    <property type="entry name" value="S-AdoMet_synthetase_sfam"/>
</dbReference>
<dbReference type="NCBIfam" id="TIGR01034">
    <property type="entry name" value="metK"/>
    <property type="match status" value="1"/>
</dbReference>
<dbReference type="PANTHER" id="PTHR11964">
    <property type="entry name" value="S-ADENOSYLMETHIONINE SYNTHETASE"/>
    <property type="match status" value="1"/>
</dbReference>
<dbReference type="Pfam" id="PF02773">
    <property type="entry name" value="S-AdoMet_synt_C"/>
    <property type="match status" value="1"/>
</dbReference>
<dbReference type="Pfam" id="PF02772">
    <property type="entry name" value="S-AdoMet_synt_M"/>
    <property type="match status" value="1"/>
</dbReference>
<dbReference type="Pfam" id="PF00438">
    <property type="entry name" value="S-AdoMet_synt_N"/>
    <property type="match status" value="1"/>
</dbReference>
<dbReference type="PIRSF" id="PIRSF000497">
    <property type="entry name" value="MAT"/>
    <property type="match status" value="1"/>
</dbReference>
<dbReference type="SUPFAM" id="SSF55973">
    <property type="entry name" value="S-adenosylmethionine synthetase"/>
    <property type="match status" value="3"/>
</dbReference>
<dbReference type="PROSITE" id="PS00376">
    <property type="entry name" value="ADOMET_SYNTHASE_1"/>
    <property type="match status" value="1"/>
</dbReference>
<dbReference type="PROSITE" id="PS00377">
    <property type="entry name" value="ADOMET_SYNTHASE_2"/>
    <property type="match status" value="1"/>
</dbReference>
<feature type="chain" id="PRO_0000302917" description="S-adenosylmethionine synthase">
    <location>
        <begin position="1"/>
        <end position="386"/>
    </location>
</feature>
<feature type="region of interest" description="Flexible loop" evidence="1">
    <location>
        <begin position="100"/>
        <end position="110"/>
    </location>
</feature>
<feature type="binding site" description="in other chain" evidence="1">
    <location>
        <position position="16"/>
    </location>
    <ligand>
        <name>ATP</name>
        <dbReference type="ChEBI" id="CHEBI:30616"/>
        <note>ligand shared between two neighboring subunits</note>
    </ligand>
</feature>
<feature type="binding site" evidence="1">
    <location>
        <position position="18"/>
    </location>
    <ligand>
        <name>Mg(2+)</name>
        <dbReference type="ChEBI" id="CHEBI:18420"/>
    </ligand>
</feature>
<feature type="binding site" evidence="1">
    <location>
        <position position="44"/>
    </location>
    <ligand>
        <name>K(+)</name>
        <dbReference type="ChEBI" id="CHEBI:29103"/>
    </ligand>
</feature>
<feature type="binding site" description="in other chain" evidence="1">
    <location>
        <position position="57"/>
    </location>
    <ligand>
        <name>L-methionine</name>
        <dbReference type="ChEBI" id="CHEBI:57844"/>
        <note>ligand shared between two neighboring subunits</note>
    </ligand>
</feature>
<feature type="binding site" description="in other chain" evidence="1">
    <location>
        <position position="100"/>
    </location>
    <ligand>
        <name>L-methionine</name>
        <dbReference type="ChEBI" id="CHEBI:57844"/>
        <note>ligand shared between two neighboring subunits</note>
    </ligand>
</feature>
<feature type="binding site" description="in other chain" evidence="1">
    <location>
        <begin position="165"/>
        <end position="167"/>
    </location>
    <ligand>
        <name>ATP</name>
        <dbReference type="ChEBI" id="CHEBI:30616"/>
        <note>ligand shared between two neighboring subunits</note>
    </ligand>
</feature>
<feature type="binding site" evidence="1">
    <location>
        <position position="240"/>
    </location>
    <ligand>
        <name>ATP</name>
        <dbReference type="ChEBI" id="CHEBI:30616"/>
        <note>ligand shared between two neighboring subunits</note>
    </ligand>
</feature>
<feature type="binding site" evidence="1">
    <location>
        <position position="240"/>
    </location>
    <ligand>
        <name>L-methionine</name>
        <dbReference type="ChEBI" id="CHEBI:57844"/>
        <note>ligand shared between two neighboring subunits</note>
    </ligand>
</feature>
<feature type="binding site" description="in other chain" evidence="1">
    <location>
        <begin position="246"/>
        <end position="247"/>
    </location>
    <ligand>
        <name>ATP</name>
        <dbReference type="ChEBI" id="CHEBI:30616"/>
        <note>ligand shared between two neighboring subunits</note>
    </ligand>
</feature>
<feature type="binding site" evidence="1">
    <location>
        <position position="263"/>
    </location>
    <ligand>
        <name>ATP</name>
        <dbReference type="ChEBI" id="CHEBI:30616"/>
        <note>ligand shared between two neighboring subunits</note>
    </ligand>
</feature>
<feature type="binding site" evidence="1">
    <location>
        <position position="267"/>
    </location>
    <ligand>
        <name>ATP</name>
        <dbReference type="ChEBI" id="CHEBI:30616"/>
        <note>ligand shared between two neighboring subunits</note>
    </ligand>
</feature>
<feature type="binding site" description="in other chain" evidence="1">
    <location>
        <position position="271"/>
    </location>
    <ligand>
        <name>L-methionine</name>
        <dbReference type="ChEBI" id="CHEBI:57844"/>
        <note>ligand shared between two neighboring subunits</note>
    </ligand>
</feature>
<keyword id="KW-0067">ATP-binding</keyword>
<keyword id="KW-0963">Cytoplasm</keyword>
<keyword id="KW-0460">Magnesium</keyword>
<keyword id="KW-0479">Metal-binding</keyword>
<keyword id="KW-0547">Nucleotide-binding</keyword>
<keyword id="KW-0554">One-carbon metabolism</keyword>
<keyword id="KW-0630">Potassium</keyword>
<keyword id="KW-0808">Transferase</keyword>